<sequence length="920" mass="105012">MSYNRLGESYGEDDHSHSPMMNPHQTNNRSPSPGRPLNAYQLSDVSYGPQERLHMPSSDLLAEQPTYSVERLPNSYGHNEAYEQHHQQSYPGYEYAVDPEAHHDAYYTQPYQPTVTPHDDYDLGQYPEHQHQHSYSDDRIPMLQQDNPFGPDPYSDEYQVEEQADGHTPSPAPIRRWKTVKEVQLFNGNLVLDCPIAPKLLNQVPHAEPPGRDEFTHMRYSAATCDPNDFFEERFTLRQKLFAKPRHTELFIVVTMYNEDDFLFARTLIGVFKNIEHMCSRTHSKTWGKDAWKKIVVCVISDGRAKINPRTRAVLAALGVYQDGIAKQQVNGKDVTAHIYEYTTQIALELKGTQVQIKGRSAVPVQMIFCLKEKNQKKINSHRWFFQAFGRVLDPNICVLLDAGTKPGKDSIYRLWKAFDVEPMCGGACGEIKVMLSHGKKLLNPLVAGQNFEYKLSNILDKPMESAFGFISVLPGAFSAYRFVALQNDKNGQGPLERYFLGEKMHGANAGIFTANMYLAEDRILCFEIVTKRNCRWLLQYVKSSTGETDVPDQMAEFILQRRRWLNGSFFAAVYAIAHFYQIWRSDHSAIRKFALLIEFFYQTINMLFAWFGIGNFFLVFHILTTYLGQKDLLGTTGKVLGVVFEWLYLATLVTCFVLALGNRPGGSNKFYMTMVYFWIGIMIYLAFACIFVTVKSIQTEVQQDGFTFTDLFTNSTFFTIIVSLGSTYVMWFVASIIFLDPWHMFTSFIQYILLTPTYINVLNIYAFCNTHDITWGTKGDDKAEKLPSANLKPGGKVDVDIPQDDGDLNAQYDTELAKFAEKPPKEVQVISEEERQADYYKGFRSAVVLAWVFCNFALGAVVLSAAGLDRFDQSEKTSEDSNKRSTIYMAVVLWSVAGLSIFKFIGALWYLVVRMFRGV</sequence>
<keyword id="KW-1003">Cell membrane</keyword>
<keyword id="KW-0961">Cell wall biogenesis/degradation</keyword>
<keyword id="KW-0325">Glycoprotein</keyword>
<keyword id="KW-0328">Glycosyltransferase</keyword>
<keyword id="KW-0472">Membrane</keyword>
<keyword id="KW-1185">Reference proteome</keyword>
<keyword id="KW-0808">Transferase</keyword>
<keyword id="KW-0812">Transmembrane</keyword>
<keyword id="KW-1133">Transmembrane helix</keyword>
<feature type="chain" id="PRO_0000460872" description="Chitin synthase C">
    <location>
        <begin position="1"/>
        <end position="920"/>
    </location>
</feature>
<feature type="transmembrane region" description="Helical" evidence="1">
    <location>
        <begin position="466"/>
        <end position="486"/>
    </location>
</feature>
<feature type="transmembrane region" description="Helical" evidence="1">
    <location>
        <begin position="564"/>
        <end position="584"/>
    </location>
</feature>
<feature type="transmembrane region" description="Helical" evidence="1">
    <location>
        <begin position="608"/>
        <end position="628"/>
    </location>
</feature>
<feature type="transmembrane region" description="Helical" evidence="1">
    <location>
        <begin position="640"/>
        <end position="660"/>
    </location>
</feature>
<feature type="transmembrane region" description="Helical" evidence="1">
    <location>
        <begin position="675"/>
        <end position="695"/>
    </location>
</feature>
<feature type="transmembrane region" description="Helical" evidence="1">
    <location>
        <begin position="718"/>
        <end position="738"/>
    </location>
</feature>
<feature type="transmembrane region" description="Helical" evidence="1">
    <location>
        <begin position="749"/>
        <end position="769"/>
    </location>
</feature>
<feature type="transmembrane region" description="Helical" evidence="1">
    <location>
        <begin position="847"/>
        <end position="867"/>
    </location>
</feature>
<feature type="transmembrane region" description="Helical" evidence="1">
    <location>
        <begin position="892"/>
        <end position="912"/>
    </location>
</feature>
<feature type="region of interest" description="Disordered" evidence="3">
    <location>
        <begin position="1"/>
        <end position="41"/>
    </location>
</feature>
<feature type="region of interest" description="Disordered" evidence="3">
    <location>
        <begin position="140"/>
        <end position="173"/>
    </location>
</feature>
<feature type="compositionally biased region" description="Acidic residues" evidence="3">
    <location>
        <begin position="154"/>
        <end position="163"/>
    </location>
</feature>
<feature type="glycosylation site" description="N-linked (GlcNAc...) asparagine" evidence="2">
    <location>
        <position position="715"/>
    </location>
</feature>
<organism>
    <name type="scientific">Aspergillus oryzae (strain ATCC 42149 / RIB 40)</name>
    <name type="common">Yellow koji mold</name>
    <dbReference type="NCBI Taxonomy" id="510516"/>
    <lineage>
        <taxon>Eukaryota</taxon>
        <taxon>Fungi</taxon>
        <taxon>Dikarya</taxon>
        <taxon>Ascomycota</taxon>
        <taxon>Pezizomycotina</taxon>
        <taxon>Eurotiomycetes</taxon>
        <taxon>Eurotiomycetidae</taxon>
        <taxon>Eurotiales</taxon>
        <taxon>Aspergillaceae</taxon>
        <taxon>Aspergillus</taxon>
        <taxon>Aspergillus subgen. Circumdati</taxon>
    </lineage>
</organism>
<protein>
    <recommendedName>
        <fullName evidence="5">Chitin synthase C</fullName>
        <ecNumber evidence="7">2.4.1.16</ecNumber>
    </recommendedName>
    <alternativeName>
        <fullName evidence="6">Chitin-UDP acetyl-glucosaminyl transferase C</fullName>
    </alternativeName>
    <alternativeName>
        <fullName evidence="5">Class-I chitin synthase C</fullName>
    </alternativeName>
</protein>
<reference key="1">
    <citation type="submission" date="2001-11" db="EMBL/GenBank/DDBJ databases">
        <title>Differential chitin synthases from Aspergilus oryzae.</title>
        <authorList>
            <person name="Chigira Y."/>
            <person name="Yabe T."/>
            <person name="Machida M."/>
            <person name="Abe K."/>
            <person name="Nakajima T."/>
        </authorList>
    </citation>
    <scope>NUCLEOTIDE SEQUENCE [MRNA]</scope>
    <source>
        <strain>ATCC 42149 / RIB 40</strain>
    </source>
</reference>
<reference key="2">
    <citation type="journal article" date="2005" name="Nature">
        <title>Genome sequencing and analysis of Aspergillus oryzae.</title>
        <authorList>
            <person name="Machida M."/>
            <person name="Asai K."/>
            <person name="Sano M."/>
            <person name="Tanaka T."/>
            <person name="Kumagai T."/>
            <person name="Terai G."/>
            <person name="Kusumoto K."/>
            <person name="Arima T."/>
            <person name="Akita O."/>
            <person name="Kashiwagi Y."/>
            <person name="Abe K."/>
            <person name="Gomi K."/>
            <person name="Horiuchi H."/>
            <person name="Kitamoto K."/>
            <person name="Kobayashi T."/>
            <person name="Takeuchi M."/>
            <person name="Denning D.W."/>
            <person name="Galagan J.E."/>
            <person name="Nierman W.C."/>
            <person name="Yu J."/>
            <person name="Archer D.B."/>
            <person name="Bennett J.W."/>
            <person name="Bhatnagar D."/>
            <person name="Cleveland T.E."/>
            <person name="Fedorova N.D."/>
            <person name="Gotoh O."/>
            <person name="Horikawa H."/>
            <person name="Hosoyama A."/>
            <person name="Ichinomiya M."/>
            <person name="Igarashi R."/>
            <person name="Iwashita K."/>
            <person name="Juvvadi P.R."/>
            <person name="Kato M."/>
            <person name="Kato Y."/>
            <person name="Kin T."/>
            <person name="Kokubun A."/>
            <person name="Maeda H."/>
            <person name="Maeyama N."/>
            <person name="Maruyama J."/>
            <person name="Nagasaki H."/>
            <person name="Nakajima T."/>
            <person name="Oda K."/>
            <person name="Okada K."/>
            <person name="Paulsen I."/>
            <person name="Sakamoto K."/>
            <person name="Sawano T."/>
            <person name="Takahashi M."/>
            <person name="Takase K."/>
            <person name="Terabayashi Y."/>
            <person name="Wortman J.R."/>
            <person name="Yamada O."/>
            <person name="Yamagata Y."/>
            <person name="Anazawa H."/>
            <person name="Hata Y."/>
            <person name="Koide Y."/>
            <person name="Komori T."/>
            <person name="Koyama Y."/>
            <person name="Minetoki T."/>
            <person name="Suharnan S."/>
            <person name="Tanaka A."/>
            <person name="Isono K."/>
            <person name="Kuhara S."/>
            <person name="Ogasawara N."/>
            <person name="Kikuchi H."/>
        </authorList>
    </citation>
    <scope>NUCLEOTIDE SEQUENCE [LARGE SCALE GENOMIC DNA]</scope>
    <source>
        <strain>ATCC 42149 / RIB 40</strain>
    </source>
</reference>
<reference key="3">
    <citation type="journal article" date="2002" name="Microbiology">
        <title>Altering the expression of two chitin synthase genes differentially affects the growth and morphology of Aspergillus oryzae.</title>
        <authorList>
            <person name="Mueller C."/>
            <person name="Hjort C.M."/>
            <person name="Hansen K."/>
            <person name="Nielsen J."/>
        </authorList>
    </citation>
    <scope>FUNCTION</scope>
    <scope>INDUCTION</scope>
</reference>
<dbReference type="EC" id="2.4.1.16" evidence="7"/>
<dbReference type="EMBL" id="AB073933">
    <property type="protein sequence ID" value="BAB85684.1"/>
    <property type="molecule type" value="mRNA"/>
</dbReference>
<dbReference type="EMBL" id="AP007171">
    <property type="protein sequence ID" value="BAE64950.1"/>
    <property type="molecule type" value="Genomic_DNA"/>
</dbReference>
<dbReference type="RefSeq" id="XP_001826083.1">
    <property type="nucleotide sequence ID" value="XM_001826031.2"/>
</dbReference>
<dbReference type="SMR" id="Q2U0G5"/>
<dbReference type="STRING" id="510516.Q2U0G5"/>
<dbReference type="CAZy" id="GT2">
    <property type="family name" value="Glycosyltransferase Family 2"/>
</dbReference>
<dbReference type="EnsemblFungi" id="BAE64950">
    <property type="protein sequence ID" value="BAE64950"/>
    <property type="gene ID" value="AO090011000449"/>
</dbReference>
<dbReference type="GeneID" id="5998186"/>
<dbReference type="KEGG" id="aor:AO090011000449"/>
<dbReference type="VEuPathDB" id="FungiDB:AO090011000449"/>
<dbReference type="HOGENOM" id="CLU_004760_3_1_1"/>
<dbReference type="OMA" id="AWILHYV"/>
<dbReference type="OrthoDB" id="25385at5052"/>
<dbReference type="Proteomes" id="UP000006564">
    <property type="component" value="Chromosome 7"/>
</dbReference>
<dbReference type="GO" id="GO:0030428">
    <property type="term" value="C:cell septum"/>
    <property type="evidence" value="ECO:0007669"/>
    <property type="project" value="TreeGrafter"/>
</dbReference>
<dbReference type="GO" id="GO:0045009">
    <property type="term" value="C:chitosome"/>
    <property type="evidence" value="ECO:0007669"/>
    <property type="project" value="EnsemblFungi"/>
</dbReference>
<dbReference type="GO" id="GO:0005886">
    <property type="term" value="C:plasma membrane"/>
    <property type="evidence" value="ECO:0007669"/>
    <property type="project" value="UniProtKB-SubCell"/>
</dbReference>
<dbReference type="GO" id="GO:0004100">
    <property type="term" value="F:chitin synthase activity"/>
    <property type="evidence" value="ECO:0007669"/>
    <property type="project" value="UniProtKB-EC"/>
</dbReference>
<dbReference type="GO" id="GO:0030476">
    <property type="term" value="P:ascospore wall assembly"/>
    <property type="evidence" value="ECO:0007669"/>
    <property type="project" value="EnsemblFungi"/>
</dbReference>
<dbReference type="GO" id="GO:0006031">
    <property type="term" value="P:chitin biosynthetic process"/>
    <property type="evidence" value="ECO:0007669"/>
    <property type="project" value="EnsemblFungi"/>
</dbReference>
<dbReference type="GO" id="GO:0000920">
    <property type="term" value="P:septum digestion after cytokinesis"/>
    <property type="evidence" value="ECO:0007669"/>
    <property type="project" value="EnsemblFungi"/>
</dbReference>
<dbReference type="CDD" id="cd04190">
    <property type="entry name" value="Chitin_synth_C"/>
    <property type="match status" value="1"/>
</dbReference>
<dbReference type="InterPro" id="IPR004835">
    <property type="entry name" value="Chitin_synth"/>
</dbReference>
<dbReference type="InterPro" id="IPR004834">
    <property type="entry name" value="Chitin_synth_fun"/>
</dbReference>
<dbReference type="InterPro" id="IPR013616">
    <property type="entry name" value="Chitin_synth_N"/>
</dbReference>
<dbReference type="PANTHER" id="PTHR22914">
    <property type="entry name" value="CHITIN SYNTHASE"/>
    <property type="match status" value="1"/>
</dbReference>
<dbReference type="PANTHER" id="PTHR22914:SF9">
    <property type="entry name" value="CHITIN SYNTHASE 1"/>
    <property type="match status" value="1"/>
</dbReference>
<dbReference type="Pfam" id="PF01644">
    <property type="entry name" value="Chitin_synth_1"/>
    <property type="match status" value="1"/>
</dbReference>
<dbReference type="Pfam" id="PF08407">
    <property type="entry name" value="Chitin_synth_1N"/>
    <property type="match status" value="1"/>
</dbReference>
<evidence type="ECO:0000255" key="1"/>
<evidence type="ECO:0000255" key="2">
    <source>
        <dbReference type="PROSITE-ProRule" id="PRU00498"/>
    </source>
</evidence>
<evidence type="ECO:0000256" key="3">
    <source>
        <dbReference type="SAM" id="MobiDB-lite"/>
    </source>
</evidence>
<evidence type="ECO:0000269" key="4">
    <source>
    </source>
</evidence>
<evidence type="ECO:0000303" key="5">
    <source>
    </source>
</evidence>
<evidence type="ECO:0000305" key="6"/>
<evidence type="ECO:0000305" key="7">
    <source>
    </source>
</evidence>
<gene>
    <name evidence="5" type="primary">chsC</name>
    <name type="ORF">AO090011000449</name>
</gene>
<comment type="function">
    <text evidence="4 7">Polymerizes chitin, a structural polymer of the cell wall and septum, by transferring the sugar moiety of UDP-GlcNAc to the non-reducing end of the growing chitin polymer (Probable). Involved in hyphal growth (PubMed:12480906).</text>
</comment>
<comment type="catalytic activity">
    <reaction evidence="7">
        <text>[(1-&gt;4)-N-acetyl-beta-D-glucosaminyl](n) + UDP-N-acetyl-alpha-D-glucosamine = [(1-&gt;4)-N-acetyl-beta-D-glucosaminyl](n+1) + UDP + H(+)</text>
        <dbReference type="Rhea" id="RHEA:16637"/>
        <dbReference type="Rhea" id="RHEA-COMP:9593"/>
        <dbReference type="Rhea" id="RHEA-COMP:9595"/>
        <dbReference type="ChEBI" id="CHEBI:15378"/>
        <dbReference type="ChEBI" id="CHEBI:17029"/>
        <dbReference type="ChEBI" id="CHEBI:57705"/>
        <dbReference type="ChEBI" id="CHEBI:58223"/>
        <dbReference type="EC" id="2.4.1.16"/>
    </reaction>
    <physiologicalReaction direction="left-to-right" evidence="7">
        <dbReference type="Rhea" id="RHEA:16638"/>
    </physiologicalReaction>
</comment>
<comment type="subcellular location">
    <subcellularLocation>
        <location evidence="6">Cell membrane</location>
        <topology evidence="1">Multi-pass membrane protein</topology>
    </subcellularLocation>
</comment>
<comment type="induction">
    <text evidence="4">Expressed during exponential growth.</text>
</comment>
<comment type="similarity">
    <text evidence="6">Belongs to the chitin synthase family. Class I subfamily.</text>
</comment>
<accession>Q2U0G5</accession>
<accession>Q8TGD4</accession>
<proteinExistence type="evidence at transcript level"/>
<name>CHSC_ASPOR</name>